<sequence length="444" mass="48919">MWLFTVNQVLRKMQRRHSSNTDNIPPERNRSQALSSEASVDEGGVFESLKAEAASPPALFSGLSGSLPTSSFPSSLVLGSSAGGGDVFIQMPASREEGGGRGEGGAYHHRQPHHHFHHGGHRGGSLLQHVGGDHRGHSEEGGDEQPGTPAPALSELKAVICWLQKGLPFILILLAKLCFQHKLGIAVCIGMASTFAYANSTLREQVSLKEKRSVLVILWILAFLAGNTLYVLYTFSSQQLYNSLIFLKPNLETLDFFDLLWIVGIADFVLKYITIALKCLIVALPKIILAVKSKGKFYLVIEELSQLFRSLVPIQLWYKYIMGDDSSNSYFLGGVLIVLYSLCKSFDICGRVGGVRKALKLLCTSQNYGVRATGQQCTEAGDICAICQAEFREPLILLCQHVFCEECLCLWLDRERTCPLSRSVAVDTLRCWKDGATSAHFQVY</sequence>
<comment type="function">
    <text evidence="1">E3 ubiquitin-protein ligase that negatively regulates IL3-dependent cellular responses through IL3RA ubiquitination and degradation by the proteasome, having an anti-inflammatory effect.</text>
</comment>
<comment type="subcellular location">
    <subcellularLocation>
        <location evidence="5">Membrane</location>
        <topology evidence="5">Multi-pass membrane protein</topology>
    </subcellularLocation>
</comment>
<evidence type="ECO:0000250" key="1">
    <source>
        <dbReference type="UniProtKB" id="Q3UF64"/>
    </source>
</evidence>
<evidence type="ECO:0000255" key="2"/>
<evidence type="ECO:0000255" key="3">
    <source>
        <dbReference type="PROSITE-ProRule" id="PRU00175"/>
    </source>
</evidence>
<evidence type="ECO:0000256" key="4">
    <source>
        <dbReference type="SAM" id="MobiDB-lite"/>
    </source>
</evidence>
<evidence type="ECO:0000305" key="5"/>
<name>RNFT2_PONAB</name>
<proteinExistence type="evidence at transcript level"/>
<protein>
    <recommendedName>
        <fullName>RING finger and transmembrane domain-containing protein 2</fullName>
    </recommendedName>
    <alternativeName>
        <fullName>Transmembrane protein 118</fullName>
    </alternativeName>
</protein>
<organism>
    <name type="scientific">Pongo abelii</name>
    <name type="common">Sumatran orangutan</name>
    <name type="synonym">Pongo pygmaeus abelii</name>
    <dbReference type="NCBI Taxonomy" id="9601"/>
    <lineage>
        <taxon>Eukaryota</taxon>
        <taxon>Metazoa</taxon>
        <taxon>Chordata</taxon>
        <taxon>Craniata</taxon>
        <taxon>Vertebrata</taxon>
        <taxon>Euteleostomi</taxon>
        <taxon>Mammalia</taxon>
        <taxon>Eutheria</taxon>
        <taxon>Euarchontoglires</taxon>
        <taxon>Primates</taxon>
        <taxon>Haplorrhini</taxon>
        <taxon>Catarrhini</taxon>
        <taxon>Hominidae</taxon>
        <taxon>Pongo</taxon>
    </lineage>
</organism>
<dbReference type="EMBL" id="CR859053">
    <property type="protein sequence ID" value="CAH91246.1"/>
    <property type="molecule type" value="mRNA"/>
</dbReference>
<dbReference type="RefSeq" id="NP_001127393.1">
    <property type="nucleotide sequence ID" value="NM_001133921.1"/>
</dbReference>
<dbReference type="FunCoup" id="Q5RAG4">
    <property type="interactions" value="993"/>
</dbReference>
<dbReference type="GeneID" id="100174460"/>
<dbReference type="KEGG" id="pon:100174460"/>
<dbReference type="CTD" id="84900"/>
<dbReference type="eggNOG" id="KOG4638">
    <property type="taxonomic scope" value="Eukaryota"/>
</dbReference>
<dbReference type="InParanoid" id="Q5RAG4"/>
<dbReference type="OrthoDB" id="9049620at2759"/>
<dbReference type="Proteomes" id="UP000001595">
    <property type="component" value="Unplaced"/>
</dbReference>
<dbReference type="GO" id="GO:0016020">
    <property type="term" value="C:membrane"/>
    <property type="evidence" value="ECO:0007669"/>
    <property type="project" value="UniProtKB-SubCell"/>
</dbReference>
<dbReference type="GO" id="GO:0061630">
    <property type="term" value="F:ubiquitin protein ligase activity"/>
    <property type="evidence" value="ECO:0007669"/>
    <property type="project" value="InterPro"/>
</dbReference>
<dbReference type="GO" id="GO:0008270">
    <property type="term" value="F:zinc ion binding"/>
    <property type="evidence" value="ECO:0007669"/>
    <property type="project" value="UniProtKB-KW"/>
</dbReference>
<dbReference type="GO" id="GO:1904294">
    <property type="term" value="P:positive regulation of ERAD pathway"/>
    <property type="evidence" value="ECO:0007669"/>
    <property type="project" value="InterPro"/>
</dbReference>
<dbReference type="CDD" id="cd16742">
    <property type="entry name" value="RING-HC_RNFT2"/>
    <property type="match status" value="1"/>
</dbReference>
<dbReference type="Gene3D" id="3.30.40.10">
    <property type="entry name" value="Zinc/RING finger domain, C3HC4 (zinc finger)"/>
    <property type="match status" value="1"/>
</dbReference>
<dbReference type="InterPro" id="IPR044235">
    <property type="entry name" value="RNFT1/2"/>
</dbReference>
<dbReference type="InterPro" id="IPR001841">
    <property type="entry name" value="Znf_RING"/>
</dbReference>
<dbReference type="InterPro" id="IPR013083">
    <property type="entry name" value="Znf_RING/FYVE/PHD"/>
</dbReference>
<dbReference type="InterPro" id="IPR017907">
    <property type="entry name" value="Znf_RING_CS"/>
</dbReference>
<dbReference type="PANTHER" id="PTHR15860:SF2">
    <property type="entry name" value="RING FINGER AND TRANSMEMBRANE DOMAIN-CONTAINING PROTEIN 2"/>
    <property type="match status" value="1"/>
</dbReference>
<dbReference type="PANTHER" id="PTHR15860">
    <property type="entry name" value="UNCHARACTERIZED RING FINGER-CONTAINING PROTEIN"/>
    <property type="match status" value="1"/>
</dbReference>
<dbReference type="Pfam" id="PF13923">
    <property type="entry name" value="zf-C3HC4_2"/>
    <property type="match status" value="1"/>
</dbReference>
<dbReference type="SMART" id="SM00184">
    <property type="entry name" value="RING"/>
    <property type="match status" value="1"/>
</dbReference>
<dbReference type="SUPFAM" id="SSF57850">
    <property type="entry name" value="RING/U-box"/>
    <property type="match status" value="1"/>
</dbReference>
<dbReference type="PROSITE" id="PS00518">
    <property type="entry name" value="ZF_RING_1"/>
    <property type="match status" value="1"/>
</dbReference>
<dbReference type="PROSITE" id="PS50089">
    <property type="entry name" value="ZF_RING_2"/>
    <property type="match status" value="1"/>
</dbReference>
<gene>
    <name type="primary">RNFT2</name>
    <name type="synonym">TMEM118</name>
</gene>
<reference key="1">
    <citation type="submission" date="2004-11" db="EMBL/GenBank/DDBJ databases">
        <authorList>
            <consortium name="The German cDNA consortium"/>
        </authorList>
    </citation>
    <scope>NUCLEOTIDE SEQUENCE [LARGE SCALE MRNA]</scope>
    <source>
        <tissue>Brain cortex</tissue>
    </source>
</reference>
<keyword id="KW-0472">Membrane</keyword>
<keyword id="KW-0479">Metal-binding</keyword>
<keyword id="KW-1185">Reference proteome</keyword>
<keyword id="KW-0812">Transmembrane</keyword>
<keyword id="KW-1133">Transmembrane helix</keyword>
<keyword id="KW-0833">Ubl conjugation pathway</keyword>
<keyword id="KW-0862">Zinc</keyword>
<keyword id="KW-0863">Zinc-finger</keyword>
<accession>Q5RAG4</accession>
<feature type="chain" id="PRO_0000279510" description="RING finger and transmembrane domain-containing protein 2">
    <location>
        <begin position="1"/>
        <end position="444"/>
    </location>
</feature>
<feature type="topological domain" description="Extracellular" evidence="2">
    <location>
        <begin position="1"/>
        <end position="181"/>
    </location>
</feature>
<feature type="transmembrane region" description="Helical" evidence="2">
    <location>
        <begin position="182"/>
        <end position="202"/>
    </location>
</feature>
<feature type="topological domain" description="Cytoplasmic" evidence="2">
    <location>
        <begin position="203"/>
        <end position="214"/>
    </location>
</feature>
<feature type="transmembrane region" description="Helical" evidence="2">
    <location>
        <begin position="215"/>
        <end position="235"/>
    </location>
</feature>
<feature type="topological domain" description="Extracellular" evidence="2">
    <location>
        <begin position="236"/>
        <end position="255"/>
    </location>
</feature>
<feature type="transmembrane region" description="Helical" evidence="2">
    <location>
        <begin position="256"/>
        <end position="276"/>
    </location>
</feature>
<feature type="topological domain" description="Cytoplasmic" evidence="2">
    <location>
        <begin position="277"/>
        <end position="329"/>
    </location>
</feature>
<feature type="transmembrane region" description="Helical" evidence="2">
    <location>
        <begin position="330"/>
        <end position="350"/>
    </location>
</feature>
<feature type="topological domain" description="Extracellular" evidence="2">
    <location>
        <begin position="351"/>
        <end position="444"/>
    </location>
</feature>
<feature type="zinc finger region" description="RING-type; degenerate" evidence="3">
    <location>
        <begin position="384"/>
        <end position="422"/>
    </location>
</feature>
<feature type="region of interest" description="Disordered" evidence="4">
    <location>
        <begin position="13"/>
        <end position="41"/>
    </location>
</feature>
<feature type="region of interest" description="Disordered" evidence="4">
    <location>
        <begin position="92"/>
        <end position="149"/>
    </location>
</feature>
<feature type="compositionally biased region" description="Basic residues" evidence="4">
    <location>
        <begin position="107"/>
        <end position="121"/>
    </location>
</feature>
<feature type="compositionally biased region" description="Basic and acidic residues" evidence="4">
    <location>
        <begin position="131"/>
        <end position="140"/>
    </location>
</feature>